<keyword id="KW-0963">Cytoplasm</keyword>
<keyword id="KW-1185">Reference proteome</keyword>
<keyword id="KW-0687">Ribonucleoprotein</keyword>
<keyword id="KW-0689">Ribosomal protein</keyword>
<proteinExistence type="evidence at protein level"/>
<dbReference type="EMBL" id="U15741">
    <property type="protein sequence ID" value="AAA69928.1"/>
    <property type="molecule type" value="mRNA"/>
</dbReference>
<dbReference type="EMBL" id="AC011620">
    <property type="protein sequence ID" value="AAF26138.1"/>
    <property type="molecule type" value="Genomic_DNA"/>
</dbReference>
<dbReference type="EMBL" id="CP002686">
    <property type="protein sequence ID" value="AEE74263.1"/>
    <property type="molecule type" value="Genomic_DNA"/>
</dbReference>
<dbReference type="EMBL" id="AY037224">
    <property type="protein sequence ID" value="AAK59824.1"/>
    <property type="molecule type" value="mRNA"/>
</dbReference>
<dbReference type="EMBL" id="AY060533">
    <property type="protein sequence ID" value="AAL31164.1"/>
    <property type="molecule type" value="mRNA"/>
</dbReference>
<dbReference type="SMR" id="P42791"/>
<dbReference type="BioGRID" id="5060">
    <property type="interactions" value="167"/>
</dbReference>
<dbReference type="FunCoup" id="P42791">
    <property type="interactions" value="3645"/>
</dbReference>
<dbReference type="IntAct" id="P42791">
    <property type="interactions" value="1"/>
</dbReference>
<dbReference type="STRING" id="3702.P42791"/>
<dbReference type="iPTMnet" id="P42791"/>
<dbReference type="PaxDb" id="3702-AT3G05590.1"/>
<dbReference type="ProteomicsDB" id="226922"/>
<dbReference type="EnsemblPlants" id="AT3G05590.1">
    <property type="protein sequence ID" value="AT3G05590.1"/>
    <property type="gene ID" value="AT3G05590"/>
</dbReference>
<dbReference type="GeneID" id="819725"/>
<dbReference type="Gramene" id="AT3G05590.1">
    <property type="protein sequence ID" value="AT3G05590.1"/>
    <property type="gene ID" value="AT3G05590"/>
</dbReference>
<dbReference type="KEGG" id="ath:AT3G05590"/>
<dbReference type="Araport" id="AT3G05590"/>
<dbReference type="TAIR" id="AT3G05590">
    <property type="gene designation" value="RPL18"/>
</dbReference>
<dbReference type="eggNOG" id="KOG1714">
    <property type="taxonomic scope" value="Eukaryota"/>
</dbReference>
<dbReference type="HOGENOM" id="CLU_080024_0_0_1"/>
<dbReference type="InParanoid" id="P42791"/>
<dbReference type="OMA" id="IDICHKN"/>
<dbReference type="OrthoDB" id="1053538at2759"/>
<dbReference type="PhylomeDB" id="P42791"/>
<dbReference type="CD-CODE" id="4299E36E">
    <property type="entry name" value="Nucleolus"/>
</dbReference>
<dbReference type="PRO" id="PR:P42791"/>
<dbReference type="Proteomes" id="UP000006548">
    <property type="component" value="Chromosome 3"/>
</dbReference>
<dbReference type="ExpressionAtlas" id="P42791">
    <property type="expression patterns" value="baseline and differential"/>
</dbReference>
<dbReference type="GO" id="GO:0009507">
    <property type="term" value="C:chloroplast"/>
    <property type="evidence" value="ECO:0007005"/>
    <property type="project" value="TAIR"/>
</dbReference>
<dbReference type="GO" id="GO:0005829">
    <property type="term" value="C:cytosol"/>
    <property type="evidence" value="ECO:0007005"/>
    <property type="project" value="TAIR"/>
</dbReference>
<dbReference type="GO" id="GO:0022625">
    <property type="term" value="C:cytosolic large ribosomal subunit"/>
    <property type="evidence" value="ECO:0007005"/>
    <property type="project" value="TAIR"/>
</dbReference>
<dbReference type="GO" id="GO:0015934">
    <property type="term" value="C:large ribosomal subunit"/>
    <property type="evidence" value="ECO:0000314"/>
    <property type="project" value="TAIR"/>
</dbReference>
<dbReference type="GO" id="GO:0000325">
    <property type="term" value="C:plant-type vacuole"/>
    <property type="evidence" value="ECO:0007005"/>
    <property type="project" value="TAIR"/>
</dbReference>
<dbReference type="GO" id="GO:0005773">
    <property type="term" value="C:vacuole"/>
    <property type="evidence" value="ECO:0007005"/>
    <property type="project" value="TAIR"/>
</dbReference>
<dbReference type="GO" id="GO:0003729">
    <property type="term" value="F:mRNA binding"/>
    <property type="evidence" value="ECO:0000314"/>
    <property type="project" value="TAIR"/>
</dbReference>
<dbReference type="GO" id="GO:0003735">
    <property type="term" value="F:structural constituent of ribosome"/>
    <property type="evidence" value="ECO:0000314"/>
    <property type="project" value="CAFA"/>
</dbReference>
<dbReference type="GO" id="GO:0006412">
    <property type="term" value="P:translation"/>
    <property type="evidence" value="ECO:0007669"/>
    <property type="project" value="InterPro"/>
</dbReference>
<dbReference type="FunFam" id="3.100.10.10:FF:000001">
    <property type="entry name" value="60S ribosomal protein L18"/>
    <property type="match status" value="1"/>
</dbReference>
<dbReference type="Gene3D" id="3.100.10.10">
    <property type="match status" value="1"/>
</dbReference>
<dbReference type="InterPro" id="IPR000039">
    <property type="entry name" value="Ribosomal_eL18"/>
</dbReference>
<dbReference type="InterPro" id="IPR021131">
    <property type="entry name" value="Ribosomal_uL15/eL18"/>
</dbReference>
<dbReference type="InterPro" id="IPR036227">
    <property type="entry name" value="Ribosomal_uL15/eL18_sf"/>
</dbReference>
<dbReference type="PANTHER" id="PTHR10934">
    <property type="entry name" value="60S RIBOSOMAL PROTEIN L18"/>
    <property type="match status" value="1"/>
</dbReference>
<dbReference type="PANTHER" id="PTHR10934:SF25">
    <property type="entry name" value="LARGE RIBOSOMAL SUBUNIT PROTEIN EL18X-RELATED"/>
    <property type="match status" value="1"/>
</dbReference>
<dbReference type="Pfam" id="PF17135">
    <property type="entry name" value="Ribosomal_L18"/>
    <property type="match status" value="1"/>
</dbReference>
<dbReference type="SUPFAM" id="SSF52080">
    <property type="entry name" value="Ribosomal proteins L15p and L18e"/>
    <property type="match status" value="1"/>
</dbReference>
<gene>
    <name type="primary">RPL18B</name>
    <name type="ordered locus">At3g05590</name>
    <name type="ORF">F18C1.14</name>
</gene>
<organism>
    <name type="scientific">Arabidopsis thaliana</name>
    <name type="common">Mouse-ear cress</name>
    <dbReference type="NCBI Taxonomy" id="3702"/>
    <lineage>
        <taxon>Eukaryota</taxon>
        <taxon>Viridiplantae</taxon>
        <taxon>Streptophyta</taxon>
        <taxon>Embryophyta</taxon>
        <taxon>Tracheophyta</taxon>
        <taxon>Spermatophyta</taxon>
        <taxon>Magnoliopsida</taxon>
        <taxon>eudicotyledons</taxon>
        <taxon>Gunneridae</taxon>
        <taxon>Pentapetalae</taxon>
        <taxon>rosids</taxon>
        <taxon>malvids</taxon>
        <taxon>Brassicales</taxon>
        <taxon>Brassicaceae</taxon>
        <taxon>Camelineae</taxon>
        <taxon>Arabidopsis</taxon>
    </lineage>
</organism>
<reference key="1">
    <citation type="journal article" date="1995" name="Gene">
        <title>A cDNA encoding Arabidopsis thaliana cytoplasmic ribosomal protein L18.</title>
        <authorList>
            <person name="Baima S."/>
            <person name="Sessa G."/>
            <person name="Ruberti I."/>
            <person name="Morelli G."/>
        </authorList>
    </citation>
    <scope>NUCLEOTIDE SEQUENCE [MRNA]</scope>
    <scope>TISSUE SPECIFICITY</scope>
    <source>
        <strain>cv. Columbia</strain>
    </source>
</reference>
<reference key="2">
    <citation type="journal article" date="2000" name="Nature">
        <title>Sequence and analysis of chromosome 3 of the plant Arabidopsis thaliana.</title>
        <authorList>
            <person name="Salanoubat M."/>
            <person name="Lemcke K."/>
            <person name="Rieger M."/>
            <person name="Ansorge W."/>
            <person name="Unseld M."/>
            <person name="Fartmann B."/>
            <person name="Valle G."/>
            <person name="Bloecker H."/>
            <person name="Perez-Alonso M."/>
            <person name="Obermaier B."/>
            <person name="Delseny M."/>
            <person name="Boutry M."/>
            <person name="Grivell L.A."/>
            <person name="Mache R."/>
            <person name="Puigdomenech P."/>
            <person name="De Simone V."/>
            <person name="Choisne N."/>
            <person name="Artiguenave F."/>
            <person name="Robert C."/>
            <person name="Brottier P."/>
            <person name="Wincker P."/>
            <person name="Cattolico L."/>
            <person name="Weissenbach J."/>
            <person name="Saurin W."/>
            <person name="Quetier F."/>
            <person name="Schaefer M."/>
            <person name="Mueller-Auer S."/>
            <person name="Gabel C."/>
            <person name="Fuchs M."/>
            <person name="Benes V."/>
            <person name="Wurmbach E."/>
            <person name="Drzonek H."/>
            <person name="Erfle H."/>
            <person name="Jordan N."/>
            <person name="Bangert S."/>
            <person name="Wiedelmann R."/>
            <person name="Kranz H."/>
            <person name="Voss H."/>
            <person name="Holland R."/>
            <person name="Brandt P."/>
            <person name="Nyakatura G."/>
            <person name="Vezzi A."/>
            <person name="D'Angelo M."/>
            <person name="Pallavicini A."/>
            <person name="Toppo S."/>
            <person name="Simionati B."/>
            <person name="Conrad A."/>
            <person name="Hornischer K."/>
            <person name="Kauer G."/>
            <person name="Loehnert T.-H."/>
            <person name="Nordsiek G."/>
            <person name="Reichelt J."/>
            <person name="Scharfe M."/>
            <person name="Schoen O."/>
            <person name="Bargues M."/>
            <person name="Terol J."/>
            <person name="Climent J."/>
            <person name="Navarro P."/>
            <person name="Collado C."/>
            <person name="Perez-Perez A."/>
            <person name="Ottenwaelder B."/>
            <person name="Duchemin D."/>
            <person name="Cooke R."/>
            <person name="Laudie M."/>
            <person name="Berger-Llauro C."/>
            <person name="Purnelle B."/>
            <person name="Masuy D."/>
            <person name="de Haan M."/>
            <person name="Maarse A.C."/>
            <person name="Alcaraz J.-P."/>
            <person name="Cottet A."/>
            <person name="Casacuberta E."/>
            <person name="Monfort A."/>
            <person name="Argiriou A."/>
            <person name="Flores M."/>
            <person name="Liguori R."/>
            <person name="Vitale D."/>
            <person name="Mannhaupt G."/>
            <person name="Haase D."/>
            <person name="Schoof H."/>
            <person name="Rudd S."/>
            <person name="Zaccaria P."/>
            <person name="Mewes H.-W."/>
            <person name="Mayer K.F.X."/>
            <person name="Kaul S."/>
            <person name="Town C.D."/>
            <person name="Koo H.L."/>
            <person name="Tallon L.J."/>
            <person name="Jenkins J."/>
            <person name="Rooney T."/>
            <person name="Rizzo M."/>
            <person name="Walts A."/>
            <person name="Utterback T."/>
            <person name="Fujii C.Y."/>
            <person name="Shea T.P."/>
            <person name="Creasy T.H."/>
            <person name="Haas B."/>
            <person name="Maiti R."/>
            <person name="Wu D."/>
            <person name="Peterson J."/>
            <person name="Van Aken S."/>
            <person name="Pai G."/>
            <person name="Militscher J."/>
            <person name="Sellers P."/>
            <person name="Gill J.E."/>
            <person name="Feldblyum T.V."/>
            <person name="Preuss D."/>
            <person name="Lin X."/>
            <person name="Nierman W.C."/>
            <person name="Salzberg S.L."/>
            <person name="White O."/>
            <person name="Venter J.C."/>
            <person name="Fraser C.M."/>
            <person name="Kaneko T."/>
            <person name="Nakamura Y."/>
            <person name="Sato S."/>
            <person name="Kato T."/>
            <person name="Asamizu E."/>
            <person name="Sasamoto S."/>
            <person name="Kimura T."/>
            <person name="Idesawa K."/>
            <person name="Kawashima K."/>
            <person name="Kishida Y."/>
            <person name="Kiyokawa C."/>
            <person name="Kohara M."/>
            <person name="Matsumoto M."/>
            <person name="Matsuno A."/>
            <person name="Muraki A."/>
            <person name="Nakayama S."/>
            <person name="Nakazaki N."/>
            <person name="Shinpo S."/>
            <person name="Takeuchi C."/>
            <person name="Wada T."/>
            <person name="Watanabe A."/>
            <person name="Yamada M."/>
            <person name="Yasuda M."/>
            <person name="Tabata S."/>
        </authorList>
    </citation>
    <scope>NUCLEOTIDE SEQUENCE [LARGE SCALE GENOMIC DNA]</scope>
    <source>
        <strain>cv. Columbia</strain>
    </source>
</reference>
<reference key="3">
    <citation type="journal article" date="2017" name="Plant J.">
        <title>Araport11: a complete reannotation of the Arabidopsis thaliana reference genome.</title>
        <authorList>
            <person name="Cheng C.Y."/>
            <person name="Krishnakumar V."/>
            <person name="Chan A.P."/>
            <person name="Thibaud-Nissen F."/>
            <person name="Schobel S."/>
            <person name="Town C.D."/>
        </authorList>
    </citation>
    <scope>GENOME REANNOTATION</scope>
    <source>
        <strain>cv. Columbia</strain>
    </source>
</reference>
<reference key="4">
    <citation type="journal article" date="2003" name="Science">
        <title>Empirical analysis of transcriptional activity in the Arabidopsis genome.</title>
        <authorList>
            <person name="Yamada K."/>
            <person name="Lim J."/>
            <person name="Dale J.M."/>
            <person name="Chen H."/>
            <person name="Shinn P."/>
            <person name="Palm C.J."/>
            <person name="Southwick A.M."/>
            <person name="Wu H.C."/>
            <person name="Kim C.J."/>
            <person name="Nguyen M."/>
            <person name="Pham P.K."/>
            <person name="Cheuk R.F."/>
            <person name="Karlin-Newmann G."/>
            <person name="Liu S.X."/>
            <person name="Lam B."/>
            <person name="Sakano H."/>
            <person name="Wu T."/>
            <person name="Yu G."/>
            <person name="Miranda M."/>
            <person name="Quach H.L."/>
            <person name="Tripp M."/>
            <person name="Chang C.H."/>
            <person name="Lee J.M."/>
            <person name="Toriumi M.J."/>
            <person name="Chan M.M."/>
            <person name="Tang C.C."/>
            <person name="Onodera C.S."/>
            <person name="Deng J.M."/>
            <person name="Akiyama K."/>
            <person name="Ansari Y."/>
            <person name="Arakawa T."/>
            <person name="Banh J."/>
            <person name="Banno F."/>
            <person name="Bowser L."/>
            <person name="Brooks S.Y."/>
            <person name="Carninci P."/>
            <person name="Chao Q."/>
            <person name="Choy N."/>
            <person name="Enju A."/>
            <person name="Goldsmith A.D."/>
            <person name="Gurjal M."/>
            <person name="Hansen N.F."/>
            <person name="Hayashizaki Y."/>
            <person name="Johnson-Hopson C."/>
            <person name="Hsuan V.W."/>
            <person name="Iida K."/>
            <person name="Karnes M."/>
            <person name="Khan S."/>
            <person name="Koesema E."/>
            <person name="Ishida J."/>
            <person name="Jiang P.X."/>
            <person name="Jones T."/>
            <person name="Kawai J."/>
            <person name="Kamiya A."/>
            <person name="Meyers C."/>
            <person name="Nakajima M."/>
            <person name="Narusaka M."/>
            <person name="Seki M."/>
            <person name="Sakurai T."/>
            <person name="Satou M."/>
            <person name="Tamse R."/>
            <person name="Vaysberg M."/>
            <person name="Wallender E.K."/>
            <person name="Wong C."/>
            <person name="Yamamura Y."/>
            <person name="Yuan S."/>
            <person name="Shinozaki K."/>
            <person name="Davis R.W."/>
            <person name="Theologis A."/>
            <person name="Ecker J.R."/>
        </authorList>
    </citation>
    <scope>NUCLEOTIDE SEQUENCE [LARGE SCALE MRNA]</scope>
    <source>
        <strain>cv. Columbia</strain>
    </source>
</reference>
<reference key="5">
    <citation type="journal article" date="2001" name="Plant Physiol.">
        <title>The organization of cytoplasmic ribosomal protein genes in the Arabidopsis genome.</title>
        <authorList>
            <person name="Barakat A."/>
            <person name="Szick-Miranda K."/>
            <person name="Chang I.-F."/>
            <person name="Guyot R."/>
            <person name="Blanc G."/>
            <person name="Cooke R."/>
            <person name="Delseny M."/>
            <person name="Bailey-Serres J."/>
        </authorList>
    </citation>
    <scope>GENE FAMILY ORGANIZATION</scope>
    <scope>NOMENCLATURE</scope>
</reference>
<reference key="6">
    <citation type="journal article" date="2008" name="PLoS Pathog.">
        <title>Regulated nuclear trafficking of rpL10A mediated by NIK1 represents a defense strategy of plant cells against virus.</title>
        <authorList>
            <person name="Carvalho C.M."/>
            <person name="Santos A.A."/>
            <person name="Pires S.R."/>
            <person name="Rocha C.S."/>
            <person name="Saraiva D.I."/>
            <person name="Machado J.P."/>
            <person name="Mattos E.C."/>
            <person name="Fietto L.G."/>
            <person name="Fontes E.P."/>
        </authorList>
    </citation>
    <scope>INTERACTION WITH NIK1</scope>
</reference>
<reference key="7">
    <citation type="journal article" date="2017" name="Elife">
        <title>Regulation of plant immune receptor accumulation through translational repression by a glycine-tyrosine-phenylalanine (GYF) domain protein.</title>
        <authorList>
            <person name="Wu Z."/>
            <person name="Huang S."/>
            <person name="Zhang X."/>
            <person name="Wu D."/>
            <person name="Xia S."/>
            <person name="Li X."/>
        </authorList>
    </citation>
    <scope>INTERACTION WITH EXA1</scope>
    <source>
        <strain>cv. Columbia</strain>
    </source>
</reference>
<reference key="8">
    <citation type="journal article" date="2023" name="Plant Cell">
        <title>An updated nomenclature for plant ribosomal protein genes.</title>
        <authorList>
            <person name="Scarpin M.R."/>
            <person name="Busche M."/>
            <person name="Martinez R.E."/>
            <person name="Harper L.C."/>
            <person name="Reiser L."/>
            <person name="Szakonyi D."/>
            <person name="Merchante C."/>
            <person name="Lan T."/>
            <person name="Xiong W."/>
            <person name="Mo B."/>
            <person name="Tang G."/>
            <person name="Chen X."/>
            <person name="Bailey-Serres J."/>
            <person name="Browning K.S."/>
            <person name="Brunkard J.O."/>
        </authorList>
    </citation>
    <scope>NOMENCLATURE</scope>
</reference>
<accession>P42791</accession>
<accession>Q9M9W4</accession>
<feature type="chain" id="PRO_0000132780" description="Large ribosomal subunit protein eL18y">
    <location>
        <begin position="1"/>
        <end position="187"/>
    </location>
</feature>
<feature type="region of interest" description="Disordered" evidence="1">
    <location>
        <begin position="151"/>
        <end position="187"/>
    </location>
</feature>
<feature type="compositionally biased region" description="Basic residues" evidence="1">
    <location>
        <begin position="160"/>
        <end position="170"/>
    </location>
</feature>
<feature type="compositionally biased region" description="Basic residues" evidence="1">
    <location>
        <begin position="177"/>
        <end position="187"/>
    </location>
</feature>
<feature type="sequence conflict" description="In Ref. 1; AAA69928." evidence="6" ref="1">
    <original>K</original>
    <variation>R</variation>
    <location>
        <position position="59"/>
    </location>
</feature>
<sequence>MGIDLIAGGKSKKTKRTAPKSDDVYLKLTVKLYRFLVRRTNSKFNGVILKRLFMSKVNKAPLSLSRLVEFMTGKEDKIAVLVGTITDDLRVHEIPAMKVTALRFTERARARIEKAGGECLTFDQLALRAPLGQNTVLLRGPKNSREAVKHFGPAPGVPHSHSKPYVRAKGRKFEKARGKRKSRGFKV</sequence>
<name>RL182_ARATH</name>
<evidence type="ECO:0000256" key="1">
    <source>
        <dbReference type="SAM" id="MobiDB-lite"/>
    </source>
</evidence>
<evidence type="ECO:0000269" key="2">
    <source>
    </source>
</evidence>
<evidence type="ECO:0000269" key="3">
    <source>
    </source>
</evidence>
<evidence type="ECO:0000269" key="4">
    <source>
    </source>
</evidence>
<evidence type="ECO:0000303" key="5">
    <source>
    </source>
</evidence>
<evidence type="ECO:0000305" key="6"/>
<protein>
    <recommendedName>
        <fullName evidence="5">Large ribosomal subunit protein eL18y</fullName>
    </recommendedName>
    <alternativeName>
        <fullName>60S ribosomal protein L18-2</fullName>
    </alternativeName>
</protein>
<comment type="subunit">
    <text evidence="2 3">Interacts with NIK1 (PubMed:19112492). Interacts directly with EXA1 (PubMed:28362261).</text>
</comment>
<comment type="subcellular location">
    <subcellularLocation>
        <location>Cytoplasm</location>
    </subcellularLocation>
</comment>
<comment type="tissue specificity">
    <text evidence="4">Ubiquitous.</text>
</comment>
<comment type="similarity">
    <text evidence="6">Belongs to the eukaryotic ribosomal protein eL18 family.</text>
</comment>